<name>GPDA_SHIB3</name>
<dbReference type="EC" id="1.1.1.94" evidence="1"/>
<dbReference type="EMBL" id="CP001063">
    <property type="protein sequence ID" value="ACD09363.1"/>
    <property type="molecule type" value="Genomic_DNA"/>
</dbReference>
<dbReference type="RefSeq" id="WP_001076197.1">
    <property type="nucleotide sequence ID" value="NC_010658.1"/>
</dbReference>
<dbReference type="SMR" id="B2U5C7"/>
<dbReference type="STRING" id="344609.SbBS512_E4036"/>
<dbReference type="KEGG" id="sbc:SbBS512_E4036"/>
<dbReference type="HOGENOM" id="CLU_033449_0_2_6"/>
<dbReference type="UniPathway" id="UPA00940"/>
<dbReference type="Proteomes" id="UP000001030">
    <property type="component" value="Chromosome"/>
</dbReference>
<dbReference type="GO" id="GO:0005829">
    <property type="term" value="C:cytosol"/>
    <property type="evidence" value="ECO:0007669"/>
    <property type="project" value="TreeGrafter"/>
</dbReference>
<dbReference type="GO" id="GO:0047952">
    <property type="term" value="F:glycerol-3-phosphate dehydrogenase [NAD(P)+] activity"/>
    <property type="evidence" value="ECO:0007669"/>
    <property type="project" value="UniProtKB-UniRule"/>
</dbReference>
<dbReference type="GO" id="GO:0051287">
    <property type="term" value="F:NAD binding"/>
    <property type="evidence" value="ECO:0007669"/>
    <property type="project" value="InterPro"/>
</dbReference>
<dbReference type="GO" id="GO:0005975">
    <property type="term" value="P:carbohydrate metabolic process"/>
    <property type="evidence" value="ECO:0007669"/>
    <property type="project" value="InterPro"/>
</dbReference>
<dbReference type="GO" id="GO:0046167">
    <property type="term" value="P:glycerol-3-phosphate biosynthetic process"/>
    <property type="evidence" value="ECO:0007669"/>
    <property type="project" value="UniProtKB-UniRule"/>
</dbReference>
<dbReference type="GO" id="GO:0046168">
    <property type="term" value="P:glycerol-3-phosphate catabolic process"/>
    <property type="evidence" value="ECO:0007669"/>
    <property type="project" value="InterPro"/>
</dbReference>
<dbReference type="GO" id="GO:0046474">
    <property type="term" value="P:glycerophospholipid biosynthetic process"/>
    <property type="evidence" value="ECO:0007669"/>
    <property type="project" value="TreeGrafter"/>
</dbReference>
<dbReference type="FunFam" id="1.10.1040.10:FF:000001">
    <property type="entry name" value="Glycerol-3-phosphate dehydrogenase [NAD(P)+]"/>
    <property type="match status" value="1"/>
</dbReference>
<dbReference type="FunFam" id="3.40.50.720:FF:000019">
    <property type="entry name" value="Glycerol-3-phosphate dehydrogenase [NAD(P)+]"/>
    <property type="match status" value="1"/>
</dbReference>
<dbReference type="Gene3D" id="1.10.1040.10">
    <property type="entry name" value="N-(1-d-carboxylethyl)-l-norvaline Dehydrogenase, domain 2"/>
    <property type="match status" value="1"/>
</dbReference>
<dbReference type="Gene3D" id="3.40.50.720">
    <property type="entry name" value="NAD(P)-binding Rossmann-like Domain"/>
    <property type="match status" value="1"/>
</dbReference>
<dbReference type="HAMAP" id="MF_00394">
    <property type="entry name" value="NAD_Glyc3P_dehydrog"/>
    <property type="match status" value="1"/>
</dbReference>
<dbReference type="InterPro" id="IPR008927">
    <property type="entry name" value="6-PGluconate_DH-like_C_sf"/>
</dbReference>
<dbReference type="InterPro" id="IPR013328">
    <property type="entry name" value="6PGD_dom2"/>
</dbReference>
<dbReference type="InterPro" id="IPR006168">
    <property type="entry name" value="G3P_DH_NAD-dep"/>
</dbReference>
<dbReference type="InterPro" id="IPR006109">
    <property type="entry name" value="G3P_DH_NAD-dep_C"/>
</dbReference>
<dbReference type="InterPro" id="IPR011128">
    <property type="entry name" value="G3P_DH_NAD-dep_N"/>
</dbReference>
<dbReference type="InterPro" id="IPR036291">
    <property type="entry name" value="NAD(P)-bd_dom_sf"/>
</dbReference>
<dbReference type="NCBIfam" id="NF000939">
    <property type="entry name" value="PRK00094.1-1"/>
    <property type="match status" value="1"/>
</dbReference>
<dbReference type="NCBIfam" id="NF000940">
    <property type="entry name" value="PRK00094.1-2"/>
    <property type="match status" value="1"/>
</dbReference>
<dbReference type="NCBIfam" id="NF000942">
    <property type="entry name" value="PRK00094.1-4"/>
    <property type="match status" value="1"/>
</dbReference>
<dbReference type="PANTHER" id="PTHR11728">
    <property type="entry name" value="GLYCEROL-3-PHOSPHATE DEHYDROGENASE"/>
    <property type="match status" value="1"/>
</dbReference>
<dbReference type="PANTHER" id="PTHR11728:SF1">
    <property type="entry name" value="GLYCEROL-3-PHOSPHATE DEHYDROGENASE [NAD(+)] 2, CHLOROPLASTIC"/>
    <property type="match status" value="1"/>
</dbReference>
<dbReference type="Pfam" id="PF07479">
    <property type="entry name" value="NAD_Gly3P_dh_C"/>
    <property type="match status" value="1"/>
</dbReference>
<dbReference type="Pfam" id="PF01210">
    <property type="entry name" value="NAD_Gly3P_dh_N"/>
    <property type="match status" value="1"/>
</dbReference>
<dbReference type="PIRSF" id="PIRSF000114">
    <property type="entry name" value="Glycerol-3-P_dh"/>
    <property type="match status" value="1"/>
</dbReference>
<dbReference type="PRINTS" id="PR00077">
    <property type="entry name" value="GPDHDRGNASE"/>
</dbReference>
<dbReference type="SUPFAM" id="SSF48179">
    <property type="entry name" value="6-phosphogluconate dehydrogenase C-terminal domain-like"/>
    <property type="match status" value="1"/>
</dbReference>
<dbReference type="SUPFAM" id="SSF51735">
    <property type="entry name" value="NAD(P)-binding Rossmann-fold domains"/>
    <property type="match status" value="1"/>
</dbReference>
<dbReference type="PROSITE" id="PS00957">
    <property type="entry name" value="NAD_G3PDH"/>
    <property type="match status" value="1"/>
</dbReference>
<sequence>MNQRNASMTVIGAGSYGTALAITLARNGHEVVLWGHDPEHIATLERDRCNAAFLPDVPFPDTLHLESDLATALAASRNILVVVPSHVFGEVLRQIKPLMRPDARLVWATKGLEAETGRLLQDVAREALGDQIPLAVISGPTFAKELAAGLPTAISLASTDQTFADDLQQLLHCGKSFRVYSNPDFIGVQLGGAVKNVIAIGAGMSDGIGFGANARTALITRGLAEMSRLGAALGAEPATFMGMAGLGDLVLTCTDNQSRNRRFGMMLGQGMDVQSAQEKIGQVVEGYRNTKEVRELAHRFGVEMPITEEIYQVLYCGKNAREAALTLLGRARKDERSSH</sequence>
<keyword id="KW-0963">Cytoplasm</keyword>
<keyword id="KW-0444">Lipid biosynthesis</keyword>
<keyword id="KW-0443">Lipid metabolism</keyword>
<keyword id="KW-0520">NAD</keyword>
<keyword id="KW-0521">NADP</keyword>
<keyword id="KW-0547">Nucleotide-binding</keyword>
<keyword id="KW-0560">Oxidoreductase</keyword>
<keyword id="KW-0594">Phospholipid biosynthesis</keyword>
<keyword id="KW-1208">Phospholipid metabolism</keyword>
<keyword id="KW-1185">Reference proteome</keyword>
<organism>
    <name type="scientific">Shigella boydii serotype 18 (strain CDC 3083-94 / BS512)</name>
    <dbReference type="NCBI Taxonomy" id="344609"/>
    <lineage>
        <taxon>Bacteria</taxon>
        <taxon>Pseudomonadati</taxon>
        <taxon>Pseudomonadota</taxon>
        <taxon>Gammaproteobacteria</taxon>
        <taxon>Enterobacterales</taxon>
        <taxon>Enterobacteriaceae</taxon>
        <taxon>Shigella</taxon>
    </lineage>
</organism>
<reference key="1">
    <citation type="submission" date="2008-05" db="EMBL/GenBank/DDBJ databases">
        <title>Complete sequence of Shigella boydii serotype 18 strain BS512.</title>
        <authorList>
            <person name="Rasko D.A."/>
            <person name="Rosovitz M."/>
            <person name="Maurelli A.T."/>
            <person name="Myers G."/>
            <person name="Seshadri R."/>
            <person name="Cer R."/>
            <person name="Jiang L."/>
            <person name="Ravel J."/>
            <person name="Sebastian Y."/>
        </authorList>
    </citation>
    <scope>NUCLEOTIDE SEQUENCE [LARGE SCALE GENOMIC DNA]</scope>
    <source>
        <strain>CDC 3083-94 / BS512</strain>
    </source>
</reference>
<protein>
    <recommendedName>
        <fullName evidence="1">Glycerol-3-phosphate dehydrogenase [NAD(P)+]</fullName>
        <ecNumber evidence="1">1.1.1.94</ecNumber>
    </recommendedName>
    <alternativeName>
        <fullName evidence="1">NAD(P)(+)-dependent glycerol-3-phosphate dehydrogenase</fullName>
    </alternativeName>
    <alternativeName>
        <fullName evidence="1">NAD(P)H-dependent dihydroxyacetone-phosphate reductase</fullName>
    </alternativeName>
</protein>
<gene>
    <name evidence="1" type="primary">gpsA</name>
    <name type="ordered locus">SbBS512_E4036</name>
</gene>
<feature type="chain" id="PRO_1000123190" description="Glycerol-3-phosphate dehydrogenase [NAD(P)+]">
    <location>
        <begin position="1"/>
        <end position="339"/>
    </location>
</feature>
<feature type="active site" description="Proton acceptor" evidence="1">
    <location>
        <position position="195"/>
    </location>
</feature>
<feature type="binding site" evidence="1">
    <location>
        <position position="15"/>
    </location>
    <ligand>
        <name>NADPH</name>
        <dbReference type="ChEBI" id="CHEBI:57783"/>
    </ligand>
</feature>
<feature type="binding site" evidence="1">
    <location>
        <position position="16"/>
    </location>
    <ligand>
        <name>NADPH</name>
        <dbReference type="ChEBI" id="CHEBI:57783"/>
    </ligand>
</feature>
<feature type="binding site" evidence="1">
    <location>
        <position position="36"/>
    </location>
    <ligand>
        <name>NADPH</name>
        <dbReference type="ChEBI" id="CHEBI:57783"/>
    </ligand>
</feature>
<feature type="binding site" evidence="1">
    <location>
        <position position="110"/>
    </location>
    <ligand>
        <name>NADPH</name>
        <dbReference type="ChEBI" id="CHEBI:57783"/>
    </ligand>
</feature>
<feature type="binding site" evidence="1">
    <location>
        <position position="110"/>
    </location>
    <ligand>
        <name>sn-glycerol 3-phosphate</name>
        <dbReference type="ChEBI" id="CHEBI:57597"/>
    </ligand>
</feature>
<feature type="binding site" evidence="1">
    <location>
        <position position="139"/>
    </location>
    <ligand>
        <name>sn-glycerol 3-phosphate</name>
        <dbReference type="ChEBI" id="CHEBI:57597"/>
    </ligand>
</feature>
<feature type="binding site" evidence="1">
    <location>
        <position position="141"/>
    </location>
    <ligand>
        <name>sn-glycerol 3-phosphate</name>
        <dbReference type="ChEBI" id="CHEBI:57597"/>
    </ligand>
</feature>
<feature type="binding site" evidence="1">
    <location>
        <position position="143"/>
    </location>
    <ligand>
        <name>NADPH</name>
        <dbReference type="ChEBI" id="CHEBI:57783"/>
    </ligand>
</feature>
<feature type="binding site" evidence="1">
    <location>
        <position position="195"/>
    </location>
    <ligand>
        <name>sn-glycerol 3-phosphate</name>
        <dbReference type="ChEBI" id="CHEBI:57597"/>
    </ligand>
</feature>
<feature type="binding site" evidence="1">
    <location>
        <position position="248"/>
    </location>
    <ligand>
        <name>sn-glycerol 3-phosphate</name>
        <dbReference type="ChEBI" id="CHEBI:57597"/>
    </ligand>
</feature>
<feature type="binding site" evidence="1">
    <location>
        <position position="258"/>
    </location>
    <ligand>
        <name>sn-glycerol 3-phosphate</name>
        <dbReference type="ChEBI" id="CHEBI:57597"/>
    </ligand>
</feature>
<feature type="binding site" evidence="1">
    <location>
        <position position="259"/>
    </location>
    <ligand>
        <name>NADPH</name>
        <dbReference type="ChEBI" id="CHEBI:57783"/>
    </ligand>
</feature>
<feature type="binding site" evidence="1">
    <location>
        <position position="259"/>
    </location>
    <ligand>
        <name>sn-glycerol 3-phosphate</name>
        <dbReference type="ChEBI" id="CHEBI:57597"/>
    </ligand>
</feature>
<feature type="binding site" evidence="1">
    <location>
        <position position="260"/>
    </location>
    <ligand>
        <name>sn-glycerol 3-phosphate</name>
        <dbReference type="ChEBI" id="CHEBI:57597"/>
    </ligand>
</feature>
<feature type="binding site" evidence="1">
    <location>
        <position position="283"/>
    </location>
    <ligand>
        <name>NADPH</name>
        <dbReference type="ChEBI" id="CHEBI:57783"/>
    </ligand>
</feature>
<feature type="binding site" evidence="1">
    <location>
        <position position="285"/>
    </location>
    <ligand>
        <name>NADPH</name>
        <dbReference type="ChEBI" id="CHEBI:57783"/>
    </ligand>
</feature>
<accession>B2U5C7</accession>
<evidence type="ECO:0000255" key="1">
    <source>
        <dbReference type="HAMAP-Rule" id="MF_00394"/>
    </source>
</evidence>
<comment type="function">
    <text evidence="1">Catalyzes the reduction of the glycolytic intermediate dihydroxyacetone phosphate (DHAP) to sn-glycerol 3-phosphate (G3P), the key precursor for phospholipid synthesis.</text>
</comment>
<comment type="catalytic activity">
    <reaction evidence="1">
        <text>sn-glycerol 3-phosphate + NAD(+) = dihydroxyacetone phosphate + NADH + H(+)</text>
        <dbReference type="Rhea" id="RHEA:11092"/>
        <dbReference type="ChEBI" id="CHEBI:15378"/>
        <dbReference type="ChEBI" id="CHEBI:57540"/>
        <dbReference type="ChEBI" id="CHEBI:57597"/>
        <dbReference type="ChEBI" id="CHEBI:57642"/>
        <dbReference type="ChEBI" id="CHEBI:57945"/>
        <dbReference type="EC" id="1.1.1.94"/>
    </reaction>
    <physiologicalReaction direction="right-to-left" evidence="1">
        <dbReference type="Rhea" id="RHEA:11094"/>
    </physiologicalReaction>
</comment>
<comment type="catalytic activity">
    <reaction evidence="1">
        <text>sn-glycerol 3-phosphate + NADP(+) = dihydroxyacetone phosphate + NADPH + H(+)</text>
        <dbReference type="Rhea" id="RHEA:11096"/>
        <dbReference type="ChEBI" id="CHEBI:15378"/>
        <dbReference type="ChEBI" id="CHEBI:57597"/>
        <dbReference type="ChEBI" id="CHEBI:57642"/>
        <dbReference type="ChEBI" id="CHEBI:57783"/>
        <dbReference type="ChEBI" id="CHEBI:58349"/>
        <dbReference type="EC" id="1.1.1.94"/>
    </reaction>
    <physiologicalReaction direction="right-to-left" evidence="1">
        <dbReference type="Rhea" id="RHEA:11098"/>
    </physiologicalReaction>
</comment>
<comment type="pathway">
    <text evidence="1">Membrane lipid metabolism; glycerophospholipid metabolism.</text>
</comment>
<comment type="subcellular location">
    <subcellularLocation>
        <location evidence="1">Cytoplasm</location>
    </subcellularLocation>
</comment>
<comment type="similarity">
    <text evidence="1">Belongs to the NAD-dependent glycerol-3-phosphate dehydrogenase family.</text>
</comment>
<proteinExistence type="inferred from homology"/>